<sequence>MSVQELSHPLIKDGWFREINNMWPGQAMTLKVKKVLYAGKSKYQDVLVFESETYGHVLVLDGAIQATERDEFSYQEMIAHLALNSHPNPKKVLVIGGGDGGVLREVVKHECVEEAILCDIDEDVIKVSKQYLPEMSAGFNHPKVKVHIGDGFKFLQDYQNTFDVIITDSSDPDGPAEALFQKPYFQLLSDALRGGGVITTQAECMWIHLGVISNVLTAVKTVFPNVRYAYTTIPTYPSGSIGFVVASKDASIDLSKPLRKWSPEEENKLCKYYNSEIHAASFVLPTFARDVVDKATSS</sequence>
<accession>Q09741</accession>
<reference key="1">
    <citation type="journal article" date="2002" name="Nature">
        <title>The genome sequence of Schizosaccharomyces pombe.</title>
        <authorList>
            <person name="Wood V."/>
            <person name="Gwilliam R."/>
            <person name="Rajandream M.A."/>
            <person name="Lyne M.H."/>
            <person name="Lyne R."/>
            <person name="Stewart A."/>
            <person name="Sgouros J.G."/>
            <person name="Peat N."/>
            <person name="Hayles J."/>
            <person name="Baker S.G."/>
            <person name="Basham D."/>
            <person name="Bowman S."/>
            <person name="Brooks K."/>
            <person name="Brown D."/>
            <person name="Brown S."/>
            <person name="Chillingworth T."/>
            <person name="Churcher C.M."/>
            <person name="Collins M."/>
            <person name="Connor R."/>
            <person name="Cronin A."/>
            <person name="Davis P."/>
            <person name="Feltwell T."/>
            <person name="Fraser A."/>
            <person name="Gentles S."/>
            <person name="Goble A."/>
            <person name="Hamlin N."/>
            <person name="Harris D.E."/>
            <person name="Hidalgo J."/>
            <person name="Hodgson G."/>
            <person name="Holroyd S."/>
            <person name="Hornsby T."/>
            <person name="Howarth S."/>
            <person name="Huckle E.J."/>
            <person name="Hunt S."/>
            <person name="Jagels K."/>
            <person name="James K.D."/>
            <person name="Jones L."/>
            <person name="Jones M."/>
            <person name="Leather S."/>
            <person name="McDonald S."/>
            <person name="McLean J."/>
            <person name="Mooney P."/>
            <person name="Moule S."/>
            <person name="Mungall K.L."/>
            <person name="Murphy L.D."/>
            <person name="Niblett D."/>
            <person name="Odell C."/>
            <person name="Oliver K."/>
            <person name="O'Neil S."/>
            <person name="Pearson D."/>
            <person name="Quail M.A."/>
            <person name="Rabbinowitsch E."/>
            <person name="Rutherford K.M."/>
            <person name="Rutter S."/>
            <person name="Saunders D."/>
            <person name="Seeger K."/>
            <person name="Sharp S."/>
            <person name="Skelton J."/>
            <person name="Simmonds M.N."/>
            <person name="Squares R."/>
            <person name="Squares S."/>
            <person name="Stevens K."/>
            <person name="Taylor K."/>
            <person name="Taylor R.G."/>
            <person name="Tivey A."/>
            <person name="Walsh S.V."/>
            <person name="Warren T."/>
            <person name="Whitehead S."/>
            <person name="Woodward J.R."/>
            <person name="Volckaert G."/>
            <person name="Aert R."/>
            <person name="Robben J."/>
            <person name="Grymonprez B."/>
            <person name="Weltjens I."/>
            <person name="Vanstreels E."/>
            <person name="Rieger M."/>
            <person name="Schaefer M."/>
            <person name="Mueller-Auer S."/>
            <person name="Gabel C."/>
            <person name="Fuchs M."/>
            <person name="Duesterhoeft A."/>
            <person name="Fritzc C."/>
            <person name="Holzer E."/>
            <person name="Moestl D."/>
            <person name="Hilbert H."/>
            <person name="Borzym K."/>
            <person name="Langer I."/>
            <person name="Beck A."/>
            <person name="Lehrach H."/>
            <person name="Reinhardt R."/>
            <person name="Pohl T.M."/>
            <person name="Eger P."/>
            <person name="Zimmermann W."/>
            <person name="Wedler H."/>
            <person name="Wambutt R."/>
            <person name="Purnelle B."/>
            <person name="Goffeau A."/>
            <person name="Cadieu E."/>
            <person name="Dreano S."/>
            <person name="Gloux S."/>
            <person name="Lelaure V."/>
            <person name="Mottier S."/>
            <person name="Galibert F."/>
            <person name="Aves S.J."/>
            <person name="Xiang Z."/>
            <person name="Hunt C."/>
            <person name="Moore K."/>
            <person name="Hurst S.M."/>
            <person name="Lucas M."/>
            <person name="Rochet M."/>
            <person name="Gaillardin C."/>
            <person name="Tallada V.A."/>
            <person name="Garzon A."/>
            <person name="Thode G."/>
            <person name="Daga R.R."/>
            <person name="Cruzado L."/>
            <person name="Jimenez J."/>
            <person name="Sanchez M."/>
            <person name="del Rey F."/>
            <person name="Benito J."/>
            <person name="Dominguez A."/>
            <person name="Revuelta J.L."/>
            <person name="Moreno S."/>
            <person name="Armstrong J."/>
            <person name="Forsburg S.L."/>
            <person name="Cerutti L."/>
            <person name="Lowe T."/>
            <person name="McCombie W.R."/>
            <person name="Paulsen I."/>
            <person name="Potashkin J."/>
            <person name="Shpakovski G.V."/>
            <person name="Ussery D."/>
            <person name="Barrell B.G."/>
            <person name="Nurse P."/>
        </authorList>
    </citation>
    <scope>NUCLEOTIDE SEQUENCE [LARGE SCALE GENOMIC DNA]</scope>
    <source>
        <strain>972 / ATCC 24843</strain>
    </source>
</reference>
<feature type="chain" id="PRO_0000156461" description="Spermidine synthase">
    <location>
        <begin position="1"/>
        <end position="298"/>
    </location>
</feature>
<feature type="domain" description="PABS">
    <location>
        <begin position="13"/>
        <end position="248"/>
    </location>
</feature>
<feature type="active site" description="Proton acceptor" evidence="1">
    <location>
        <position position="168"/>
    </location>
</feature>
<feature type="binding site" evidence="1">
    <location>
        <position position="44"/>
    </location>
    <ligand>
        <name>S-adenosyl 3-(methylsulfanyl)propylamine</name>
        <dbReference type="ChEBI" id="CHEBI:57443"/>
    </ligand>
</feature>
<feature type="binding site" evidence="1">
    <location>
        <position position="74"/>
    </location>
    <ligand>
        <name>putrescine</name>
        <dbReference type="ChEBI" id="CHEBI:326268"/>
    </ligand>
</feature>
<feature type="binding site" evidence="1">
    <location>
        <position position="75"/>
    </location>
    <ligand>
        <name>S-adenosyl 3-(methylsulfanyl)propylamine</name>
        <dbReference type="ChEBI" id="CHEBI:57443"/>
    </ligand>
</feature>
<feature type="binding site" evidence="1">
    <location>
        <position position="99"/>
    </location>
    <ligand>
        <name>S-adenosyl 3-(methylsulfanyl)propylamine</name>
        <dbReference type="ChEBI" id="CHEBI:57443"/>
    </ligand>
</feature>
<feature type="binding site" evidence="1">
    <location>
        <position position="119"/>
    </location>
    <ligand>
        <name>S-adenosyl 3-(methylsulfanyl)propylamine</name>
        <dbReference type="ChEBI" id="CHEBI:57443"/>
    </ligand>
</feature>
<feature type="binding site" evidence="1">
    <location>
        <begin position="150"/>
        <end position="151"/>
    </location>
    <ligand>
        <name>S-adenosyl 3-(methylsulfanyl)propylamine</name>
        <dbReference type="ChEBI" id="CHEBI:57443"/>
    </ligand>
</feature>
<feature type="binding site" evidence="1">
    <location>
        <begin position="168"/>
        <end position="171"/>
    </location>
    <ligand>
        <name>putrescine</name>
        <dbReference type="ChEBI" id="CHEBI:326268"/>
    </ligand>
</feature>
<feature type="binding site" evidence="1">
    <location>
        <position position="168"/>
    </location>
    <ligand>
        <name>S-adenosyl 3-(methylsulfanyl)propylamine</name>
        <dbReference type="ChEBI" id="CHEBI:57443"/>
    </ligand>
</feature>
<feature type="binding site" evidence="1">
    <location>
        <position position="236"/>
    </location>
    <ligand>
        <name>putrescine</name>
        <dbReference type="ChEBI" id="CHEBI:326268"/>
    </ligand>
</feature>
<protein>
    <recommendedName>
        <fullName>Spermidine synthase</fullName>
        <shortName>SPDSY</shortName>
        <ecNumber>2.5.1.16</ecNumber>
    </recommendedName>
    <alternativeName>
        <fullName>Putrescine aminopropyltransferase</fullName>
    </alternativeName>
</protein>
<proteinExistence type="inferred from homology"/>
<name>SPEE_SCHPO</name>
<dbReference type="EC" id="2.5.1.16"/>
<dbReference type="EMBL" id="CU329671">
    <property type="protein sequence ID" value="CAA90820.1"/>
    <property type="molecule type" value="Genomic_DNA"/>
</dbReference>
<dbReference type="PIR" id="T39374">
    <property type="entry name" value="T39374"/>
</dbReference>
<dbReference type="SMR" id="Q09741"/>
<dbReference type="BioGRID" id="276463">
    <property type="interactions" value="1"/>
</dbReference>
<dbReference type="FunCoup" id="Q09741">
    <property type="interactions" value="664"/>
</dbReference>
<dbReference type="STRING" id="284812.Q09741"/>
<dbReference type="iPTMnet" id="Q09741"/>
<dbReference type="PaxDb" id="4896-SPBC12C2.07c.1"/>
<dbReference type="EnsemblFungi" id="SPBC12C2.07c.1">
    <property type="protein sequence ID" value="SPBC12C2.07c.1:pep"/>
    <property type="gene ID" value="SPBC12C2.07c"/>
</dbReference>
<dbReference type="KEGG" id="spo:2539919"/>
<dbReference type="PomBase" id="SPBC12C2.07c"/>
<dbReference type="VEuPathDB" id="FungiDB:SPBC12C2.07c"/>
<dbReference type="eggNOG" id="KOG1562">
    <property type="taxonomic scope" value="Eukaryota"/>
</dbReference>
<dbReference type="HOGENOM" id="CLU_048199_1_0_1"/>
<dbReference type="InParanoid" id="Q09741"/>
<dbReference type="OMA" id="FLYHEMM"/>
<dbReference type="PhylomeDB" id="Q09741"/>
<dbReference type="Reactome" id="R-SPO-351202">
    <property type="pathway name" value="Metabolism of polyamines"/>
</dbReference>
<dbReference type="UniPathway" id="UPA00248">
    <property type="reaction ID" value="UER00314"/>
</dbReference>
<dbReference type="PRO" id="PR:Q09741"/>
<dbReference type="Proteomes" id="UP000002485">
    <property type="component" value="Chromosome II"/>
</dbReference>
<dbReference type="GO" id="GO:0005829">
    <property type="term" value="C:cytosol"/>
    <property type="evidence" value="ECO:0007005"/>
    <property type="project" value="PomBase"/>
</dbReference>
<dbReference type="GO" id="GO:0005634">
    <property type="term" value="C:nucleus"/>
    <property type="evidence" value="ECO:0007005"/>
    <property type="project" value="PomBase"/>
</dbReference>
<dbReference type="GO" id="GO:0004766">
    <property type="term" value="F:spermidine synthase activity"/>
    <property type="evidence" value="ECO:0000318"/>
    <property type="project" value="GO_Central"/>
</dbReference>
<dbReference type="GO" id="GO:0015940">
    <property type="term" value="P:pantothenate biosynthetic process"/>
    <property type="evidence" value="ECO:0000266"/>
    <property type="project" value="PomBase"/>
</dbReference>
<dbReference type="GO" id="GO:0008295">
    <property type="term" value="P:spermidine biosynthetic process"/>
    <property type="evidence" value="ECO:0000318"/>
    <property type="project" value="GO_Central"/>
</dbReference>
<dbReference type="CDD" id="cd02440">
    <property type="entry name" value="AdoMet_MTases"/>
    <property type="match status" value="1"/>
</dbReference>
<dbReference type="FunFam" id="2.30.140.10:FF:000001">
    <property type="entry name" value="SPE3p Spermidine synthase"/>
    <property type="match status" value="1"/>
</dbReference>
<dbReference type="FunFam" id="3.40.50.150:FF:000013">
    <property type="entry name" value="Spermidine synthase"/>
    <property type="match status" value="1"/>
</dbReference>
<dbReference type="Gene3D" id="2.30.140.10">
    <property type="entry name" value="Spermidine synthase, tetramerisation domain"/>
    <property type="match status" value="1"/>
</dbReference>
<dbReference type="Gene3D" id="3.40.50.150">
    <property type="entry name" value="Vaccinia Virus protein VP39"/>
    <property type="match status" value="1"/>
</dbReference>
<dbReference type="HAMAP" id="MF_00198">
    <property type="entry name" value="Spermidine_synth"/>
    <property type="match status" value="1"/>
</dbReference>
<dbReference type="InterPro" id="IPR030374">
    <property type="entry name" value="PABS"/>
</dbReference>
<dbReference type="InterPro" id="IPR030373">
    <property type="entry name" value="PABS_CS"/>
</dbReference>
<dbReference type="InterPro" id="IPR029063">
    <property type="entry name" value="SAM-dependent_MTases_sf"/>
</dbReference>
<dbReference type="InterPro" id="IPR001045">
    <property type="entry name" value="Spermi_synthase"/>
</dbReference>
<dbReference type="InterPro" id="IPR030668">
    <property type="entry name" value="Spermi_synthase_euk"/>
</dbReference>
<dbReference type="InterPro" id="IPR035246">
    <property type="entry name" value="Spermidine_synt_N"/>
</dbReference>
<dbReference type="InterPro" id="IPR037163">
    <property type="entry name" value="Spermidine_synt_N_sf"/>
</dbReference>
<dbReference type="NCBIfam" id="NF002010">
    <property type="entry name" value="PRK00811.1"/>
    <property type="match status" value="1"/>
</dbReference>
<dbReference type="NCBIfam" id="TIGR00417">
    <property type="entry name" value="speE"/>
    <property type="match status" value="1"/>
</dbReference>
<dbReference type="PANTHER" id="PTHR11558:SF11">
    <property type="entry name" value="SPERMIDINE SYNTHASE"/>
    <property type="match status" value="1"/>
</dbReference>
<dbReference type="PANTHER" id="PTHR11558">
    <property type="entry name" value="SPERMIDINE/SPERMINE SYNTHASE"/>
    <property type="match status" value="1"/>
</dbReference>
<dbReference type="Pfam" id="PF17284">
    <property type="entry name" value="Spermine_synt_N"/>
    <property type="match status" value="1"/>
</dbReference>
<dbReference type="Pfam" id="PF01564">
    <property type="entry name" value="Spermine_synth"/>
    <property type="match status" value="1"/>
</dbReference>
<dbReference type="PIRSF" id="PIRSF000502">
    <property type="entry name" value="Spermidine_synth"/>
    <property type="match status" value="1"/>
</dbReference>
<dbReference type="SUPFAM" id="SSF53335">
    <property type="entry name" value="S-adenosyl-L-methionine-dependent methyltransferases"/>
    <property type="match status" value="1"/>
</dbReference>
<dbReference type="PROSITE" id="PS01330">
    <property type="entry name" value="PABS_1"/>
    <property type="match status" value="1"/>
</dbReference>
<dbReference type="PROSITE" id="PS51006">
    <property type="entry name" value="PABS_2"/>
    <property type="match status" value="1"/>
</dbReference>
<organism>
    <name type="scientific">Schizosaccharomyces pombe (strain 972 / ATCC 24843)</name>
    <name type="common">Fission yeast</name>
    <dbReference type="NCBI Taxonomy" id="284812"/>
    <lineage>
        <taxon>Eukaryota</taxon>
        <taxon>Fungi</taxon>
        <taxon>Dikarya</taxon>
        <taxon>Ascomycota</taxon>
        <taxon>Taphrinomycotina</taxon>
        <taxon>Schizosaccharomycetes</taxon>
        <taxon>Schizosaccharomycetales</taxon>
        <taxon>Schizosaccharomycetaceae</taxon>
        <taxon>Schizosaccharomyces</taxon>
    </lineage>
</organism>
<keyword id="KW-0620">Polyamine biosynthesis</keyword>
<keyword id="KW-1185">Reference proteome</keyword>
<keyword id="KW-0745">Spermidine biosynthesis</keyword>
<keyword id="KW-0808">Transferase</keyword>
<gene>
    <name type="ORF">SPBC12C2.07c</name>
</gene>
<evidence type="ECO:0000250" key="1"/>
<evidence type="ECO:0000305" key="2"/>
<comment type="catalytic activity">
    <reaction>
        <text>S-adenosyl 3-(methylsulfanyl)propylamine + putrescine = S-methyl-5'-thioadenosine + spermidine + H(+)</text>
        <dbReference type="Rhea" id="RHEA:12721"/>
        <dbReference type="ChEBI" id="CHEBI:15378"/>
        <dbReference type="ChEBI" id="CHEBI:17509"/>
        <dbReference type="ChEBI" id="CHEBI:57443"/>
        <dbReference type="ChEBI" id="CHEBI:57834"/>
        <dbReference type="ChEBI" id="CHEBI:326268"/>
        <dbReference type="EC" id="2.5.1.16"/>
    </reaction>
</comment>
<comment type="pathway">
    <text>Amine and polyamine biosynthesis; spermidine biosynthesis; spermidine from putrescine: step 1/1.</text>
</comment>
<comment type="similarity">
    <text evidence="2">Belongs to the spermidine/spermine synthase family.</text>
</comment>